<accession>Q21U51</accession>
<keyword id="KW-0997">Cell inner membrane</keyword>
<keyword id="KW-1003">Cell membrane</keyword>
<keyword id="KW-0472">Membrane</keyword>
<keyword id="KW-1185">Reference proteome</keyword>
<keyword id="KW-0812">Transmembrane</keyword>
<keyword id="KW-1133">Transmembrane helix</keyword>
<gene>
    <name type="ordered locus">Rfer_2991</name>
</gene>
<feature type="chain" id="PRO_0000391051" description="UPF0761 membrane protein Rfer_2991">
    <location>
        <begin position="1"/>
        <end position="416"/>
    </location>
</feature>
<feature type="transmembrane region" description="Helical" evidence="1">
    <location>
        <begin position="60"/>
        <end position="80"/>
    </location>
</feature>
<feature type="transmembrane region" description="Helical" evidence="1">
    <location>
        <begin position="117"/>
        <end position="137"/>
    </location>
</feature>
<feature type="transmembrane region" description="Helical" evidence="1">
    <location>
        <begin position="156"/>
        <end position="176"/>
    </location>
</feature>
<feature type="transmembrane region" description="Helical" evidence="1">
    <location>
        <begin position="187"/>
        <end position="207"/>
    </location>
</feature>
<feature type="transmembrane region" description="Helical" evidence="1">
    <location>
        <begin position="222"/>
        <end position="242"/>
    </location>
</feature>
<feature type="transmembrane region" description="Helical" evidence="1">
    <location>
        <begin position="268"/>
        <end position="288"/>
    </location>
</feature>
<organism>
    <name type="scientific">Albidiferax ferrireducens (strain ATCC BAA-621 / DSM 15236 / T118)</name>
    <name type="common">Rhodoferax ferrireducens</name>
    <dbReference type="NCBI Taxonomy" id="338969"/>
    <lineage>
        <taxon>Bacteria</taxon>
        <taxon>Pseudomonadati</taxon>
        <taxon>Pseudomonadota</taxon>
        <taxon>Betaproteobacteria</taxon>
        <taxon>Burkholderiales</taxon>
        <taxon>Comamonadaceae</taxon>
        <taxon>Rhodoferax</taxon>
    </lineage>
</organism>
<proteinExistence type="inferred from homology"/>
<comment type="subcellular location">
    <subcellularLocation>
        <location evidence="1">Cell inner membrane</location>
        <topology evidence="1">Multi-pass membrane protein</topology>
    </subcellularLocation>
</comment>
<comment type="similarity">
    <text evidence="1">Belongs to the UPF0761 family.</text>
</comment>
<sequence>MHMPPHLPASPPLSWPQRLEALLKDLTNFPWKSTARTLRERYSEDRLGLTASSLTFTTTMALVPLVTVALAIFTAFPMFAKLQSVLQKWLVTSLIPDNIARQVLGYLTQFAGQASKLGGAGIALLLVTAVALILTIDHTLNGIWRVRTRRSLGQRVLVYWAALTLGPLVLGVSLSITSYAISASKGVVGVMPGGVQFLLDVLQFFMVAWGMAAMYHFVPNTWVKWSHAWAGGMFVSAGLELAKKLLALYLGKVPTYSVLYGAFATVPILLIWIYVAWIIVLLGAVIAAYLPSLTSGIQHRGRSHGLQFQLALETLQQLERVRSDAVKGLTMQQLAQLLRVDALQLEPVLETLSELDWIGLLNEEFKGEAARYVMLANPDATALAPLLDTLLLRREESTQNLWEKGRWPLLNVRDVL</sequence>
<protein>
    <recommendedName>
        <fullName evidence="1">UPF0761 membrane protein Rfer_2991</fullName>
    </recommendedName>
</protein>
<name>Y2991_ALBFT</name>
<dbReference type="EMBL" id="CP000267">
    <property type="protein sequence ID" value="ABD70702.1"/>
    <property type="molecule type" value="Genomic_DNA"/>
</dbReference>
<dbReference type="RefSeq" id="WP_011465268.1">
    <property type="nucleotide sequence ID" value="NC_007908.1"/>
</dbReference>
<dbReference type="SMR" id="Q21U51"/>
<dbReference type="STRING" id="338969.Rfer_2991"/>
<dbReference type="KEGG" id="rfr:Rfer_2991"/>
<dbReference type="eggNOG" id="COG1295">
    <property type="taxonomic scope" value="Bacteria"/>
</dbReference>
<dbReference type="HOGENOM" id="CLU_032288_1_2_4"/>
<dbReference type="OrthoDB" id="9808671at2"/>
<dbReference type="Proteomes" id="UP000008332">
    <property type="component" value="Chromosome"/>
</dbReference>
<dbReference type="GO" id="GO:0005886">
    <property type="term" value="C:plasma membrane"/>
    <property type="evidence" value="ECO:0007669"/>
    <property type="project" value="UniProtKB-SubCell"/>
</dbReference>
<dbReference type="HAMAP" id="MF_00672">
    <property type="entry name" value="UPF0761"/>
    <property type="match status" value="1"/>
</dbReference>
<dbReference type="InterPro" id="IPR023679">
    <property type="entry name" value="UPF0761_bac"/>
</dbReference>
<dbReference type="InterPro" id="IPR017039">
    <property type="entry name" value="Virul_fac_BrkB"/>
</dbReference>
<dbReference type="NCBIfam" id="TIGR00765">
    <property type="entry name" value="yihY_not_rbn"/>
    <property type="match status" value="1"/>
</dbReference>
<dbReference type="PANTHER" id="PTHR30213">
    <property type="entry name" value="INNER MEMBRANE PROTEIN YHJD"/>
    <property type="match status" value="1"/>
</dbReference>
<dbReference type="PANTHER" id="PTHR30213:SF0">
    <property type="entry name" value="UPF0761 MEMBRANE PROTEIN YIHY"/>
    <property type="match status" value="1"/>
</dbReference>
<dbReference type="Pfam" id="PF03631">
    <property type="entry name" value="Virul_fac_BrkB"/>
    <property type="match status" value="1"/>
</dbReference>
<reference key="1">
    <citation type="submission" date="2006-02" db="EMBL/GenBank/DDBJ databases">
        <title>Complete sequence of chromosome of Rhodoferax ferrireducens DSM 15236.</title>
        <authorList>
            <person name="Copeland A."/>
            <person name="Lucas S."/>
            <person name="Lapidus A."/>
            <person name="Barry K."/>
            <person name="Detter J.C."/>
            <person name="Glavina del Rio T."/>
            <person name="Hammon N."/>
            <person name="Israni S."/>
            <person name="Pitluck S."/>
            <person name="Brettin T."/>
            <person name="Bruce D."/>
            <person name="Han C."/>
            <person name="Tapia R."/>
            <person name="Gilna P."/>
            <person name="Kiss H."/>
            <person name="Schmutz J."/>
            <person name="Larimer F."/>
            <person name="Land M."/>
            <person name="Kyrpides N."/>
            <person name="Ivanova N."/>
            <person name="Richardson P."/>
        </authorList>
    </citation>
    <scope>NUCLEOTIDE SEQUENCE [LARGE SCALE GENOMIC DNA]</scope>
    <source>
        <strain>ATCC BAA-621 / DSM 15236 / T118</strain>
    </source>
</reference>
<evidence type="ECO:0000255" key="1">
    <source>
        <dbReference type="HAMAP-Rule" id="MF_00672"/>
    </source>
</evidence>